<gene>
    <name type="primary">trpR</name>
    <name type="ordered locus">STY4930</name>
    <name type="ordered locus">t4622</name>
</gene>
<reference key="1">
    <citation type="journal article" date="2001" name="Nature">
        <title>Complete genome sequence of a multiple drug resistant Salmonella enterica serovar Typhi CT18.</title>
        <authorList>
            <person name="Parkhill J."/>
            <person name="Dougan G."/>
            <person name="James K.D."/>
            <person name="Thomson N.R."/>
            <person name="Pickard D."/>
            <person name="Wain J."/>
            <person name="Churcher C.M."/>
            <person name="Mungall K.L."/>
            <person name="Bentley S.D."/>
            <person name="Holden M.T.G."/>
            <person name="Sebaihia M."/>
            <person name="Baker S."/>
            <person name="Basham D."/>
            <person name="Brooks K."/>
            <person name="Chillingworth T."/>
            <person name="Connerton P."/>
            <person name="Cronin A."/>
            <person name="Davis P."/>
            <person name="Davies R.M."/>
            <person name="Dowd L."/>
            <person name="White N."/>
            <person name="Farrar J."/>
            <person name="Feltwell T."/>
            <person name="Hamlin N."/>
            <person name="Haque A."/>
            <person name="Hien T.T."/>
            <person name="Holroyd S."/>
            <person name="Jagels K."/>
            <person name="Krogh A."/>
            <person name="Larsen T.S."/>
            <person name="Leather S."/>
            <person name="Moule S."/>
            <person name="O'Gaora P."/>
            <person name="Parry C."/>
            <person name="Quail M.A."/>
            <person name="Rutherford K.M."/>
            <person name="Simmonds M."/>
            <person name="Skelton J."/>
            <person name="Stevens K."/>
            <person name="Whitehead S."/>
            <person name="Barrell B.G."/>
        </authorList>
    </citation>
    <scope>NUCLEOTIDE SEQUENCE [LARGE SCALE GENOMIC DNA]</scope>
    <source>
        <strain>CT18</strain>
    </source>
</reference>
<reference key="2">
    <citation type="journal article" date="2003" name="J. Bacteriol.">
        <title>Comparative genomics of Salmonella enterica serovar Typhi strains Ty2 and CT18.</title>
        <authorList>
            <person name="Deng W."/>
            <person name="Liou S.-R."/>
            <person name="Plunkett G. III"/>
            <person name="Mayhew G.F."/>
            <person name="Rose D.J."/>
            <person name="Burland V."/>
            <person name="Kodoyianni V."/>
            <person name="Schwartz D.C."/>
            <person name="Blattner F.R."/>
        </authorList>
    </citation>
    <scope>NUCLEOTIDE SEQUENCE [LARGE SCALE GENOMIC DNA]</scope>
    <source>
        <strain>ATCC 700931 / Ty2</strain>
    </source>
</reference>
<name>TRPR_SALTI</name>
<evidence type="ECO:0000250" key="1"/>
<evidence type="ECO:0000305" key="2"/>
<keyword id="KW-0963">Cytoplasm</keyword>
<keyword id="KW-0238">DNA-binding</keyword>
<keyword id="KW-0678">Repressor</keyword>
<keyword id="KW-0804">Transcription</keyword>
<keyword id="KW-0805">Transcription regulation</keyword>
<feature type="chain" id="PRO_0000196502" description="Trp operon repressor">
    <location>
        <begin position="1"/>
        <end position="108"/>
    </location>
</feature>
<feature type="DNA-binding region" evidence="1">
    <location>
        <begin position="68"/>
        <end position="91"/>
    </location>
</feature>
<sequence length="108" mass="12392">MTQHSPYSSAIAEQRNQEWLRFVELLRQAYAEDLHLPLLQLMLTPDEREALGTRVRIIEELLRGEMSQRELKTELGAGIATITRGSNSLKSAPVELRHWLEQILLKSA</sequence>
<proteinExistence type="inferred from homology"/>
<protein>
    <recommendedName>
        <fullName>Trp operon repressor</fullName>
    </recommendedName>
</protein>
<dbReference type="EMBL" id="AL513382">
    <property type="protein sequence ID" value="CAD03414.1"/>
    <property type="molecule type" value="Genomic_DNA"/>
</dbReference>
<dbReference type="EMBL" id="AE014613">
    <property type="protein sequence ID" value="AAO72054.1"/>
    <property type="molecule type" value="Genomic_DNA"/>
</dbReference>
<dbReference type="RefSeq" id="NP_458991.1">
    <property type="nucleotide sequence ID" value="NC_003198.1"/>
</dbReference>
<dbReference type="RefSeq" id="WP_000192005.1">
    <property type="nucleotide sequence ID" value="NZ_WSUR01000014.1"/>
</dbReference>
<dbReference type="SMR" id="P58699"/>
<dbReference type="STRING" id="220341.gene:17588748"/>
<dbReference type="KEGG" id="stt:t4622"/>
<dbReference type="KEGG" id="sty:STY4930"/>
<dbReference type="PATRIC" id="fig|220341.7.peg.5052"/>
<dbReference type="eggNOG" id="COG2973">
    <property type="taxonomic scope" value="Bacteria"/>
</dbReference>
<dbReference type="HOGENOM" id="CLU_147939_0_0_6"/>
<dbReference type="OMA" id="MSHEPEY"/>
<dbReference type="OrthoDB" id="5704033at2"/>
<dbReference type="Proteomes" id="UP000000541">
    <property type="component" value="Chromosome"/>
</dbReference>
<dbReference type="Proteomes" id="UP000002670">
    <property type="component" value="Chromosome"/>
</dbReference>
<dbReference type="GO" id="GO:0005737">
    <property type="term" value="C:cytoplasm"/>
    <property type="evidence" value="ECO:0007669"/>
    <property type="project" value="UniProtKB-SubCell"/>
</dbReference>
<dbReference type="GO" id="GO:0003700">
    <property type="term" value="F:DNA-binding transcription factor activity"/>
    <property type="evidence" value="ECO:0007669"/>
    <property type="project" value="InterPro"/>
</dbReference>
<dbReference type="GO" id="GO:0043565">
    <property type="term" value="F:sequence-specific DNA binding"/>
    <property type="evidence" value="ECO:0007669"/>
    <property type="project" value="InterPro"/>
</dbReference>
<dbReference type="GO" id="GO:0045892">
    <property type="term" value="P:negative regulation of DNA-templated transcription"/>
    <property type="evidence" value="ECO:0007669"/>
    <property type="project" value="UniProtKB-UniRule"/>
</dbReference>
<dbReference type="FunFam" id="1.10.1270.10:FF:000001">
    <property type="entry name" value="Trp operon repressor"/>
    <property type="match status" value="1"/>
</dbReference>
<dbReference type="Gene3D" id="1.10.1270.10">
    <property type="entry name" value="TrpR-like"/>
    <property type="match status" value="1"/>
</dbReference>
<dbReference type="HAMAP" id="MF_00475">
    <property type="entry name" value="Trp_repressor"/>
    <property type="match status" value="1"/>
</dbReference>
<dbReference type="InterPro" id="IPR000831">
    <property type="entry name" value="Trp_repress"/>
</dbReference>
<dbReference type="InterPro" id="IPR013335">
    <property type="entry name" value="Trp_repress_bac"/>
</dbReference>
<dbReference type="InterPro" id="IPR010921">
    <property type="entry name" value="Trp_repressor/repl_initiator"/>
</dbReference>
<dbReference type="InterPro" id="IPR038116">
    <property type="entry name" value="TrpR-like_sf"/>
</dbReference>
<dbReference type="NCBIfam" id="TIGR01321">
    <property type="entry name" value="TrpR"/>
    <property type="match status" value="1"/>
</dbReference>
<dbReference type="PANTHER" id="PTHR38025">
    <property type="entry name" value="TRP OPERON REPRESSOR"/>
    <property type="match status" value="1"/>
</dbReference>
<dbReference type="PANTHER" id="PTHR38025:SF1">
    <property type="entry name" value="TRP OPERON REPRESSOR"/>
    <property type="match status" value="1"/>
</dbReference>
<dbReference type="Pfam" id="PF01371">
    <property type="entry name" value="Trp_repressor"/>
    <property type="match status" value="1"/>
</dbReference>
<dbReference type="PIRSF" id="PIRSF003196">
    <property type="entry name" value="Trp_repressor"/>
    <property type="match status" value="1"/>
</dbReference>
<dbReference type="SUPFAM" id="SSF48295">
    <property type="entry name" value="TrpR-like"/>
    <property type="match status" value="1"/>
</dbReference>
<accession>P58699</accession>
<comment type="function">
    <text evidence="1">This protein is an aporepressor. When complexed with L-tryptophan it binds the operator region of the trp operon (5'-ACTAGT-'3') and prevents the initiation of transcription. The complex also regulates trp repressor biosynthesis by binding to its regulatory region (By similarity).</text>
</comment>
<comment type="subunit">
    <text evidence="1">Homodimer.</text>
</comment>
<comment type="subcellular location">
    <subcellularLocation>
        <location evidence="1">Cytoplasm</location>
    </subcellularLocation>
</comment>
<comment type="similarity">
    <text evidence="2">Belongs to the TrpR family.</text>
</comment>
<organism>
    <name type="scientific">Salmonella typhi</name>
    <dbReference type="NCBI Taxonomy" id="90370"/>
    <lineage>
        <taxon>Bacteria</taxon>
        <taxon>Pseudomonadati</taxon>
        <taxon>Pseudomonadota</taxon>
        <taxon>Gammaproteobacteria</taxon>
        <taxon>Enterobacterales</taxon>
        <taxon>Enterobacteriaceae</taxon>
        <taxon>Salmonella</taxon>
    </lineage>
</organism>